<comment type="function">
    <text evidence="1">Involved in the regulation of glutamine synthetase GlnA, a key enzyme in the process to assimilate ammonia. When cellular nitrogen levels are high, the C-terminal adenylyl transferase (AT) inactivates GlnA by covalent transfer of an adenylyl group from ATP to specific tyrosine residue of GlnA, thus reducing its activity. Conversely, when nitrogen levels are low, the N-terminal adenylyl removase (AR) activates GlnA by removing the adenylyl group by phosphorolysis, increasing its activity. The regulatory region of GlnE binds the signal transduction protein PII (GlnB) which indicates the nitrogen status of the cell.</text>
</comment>
<comment type="catalytic activity">
    <reaction evidence="1">
        <text>[glutamine synthetase]-O(4)-(5'-adenylyl)-L-tyrosine + phosphate = [glutamine synthetase]-L-tyrosine + ADP</text>
        <dbReference type="Rhea" id="RHEA:43716"/>
        <dbReference type="Rhea" id="RHEA-COMP:10660"/>
        <dbReference type="Rhea" id="RHEA-COMP:10661"/>
        <dbReference type="ChEBI" id="CHEBI:43474"/>
        <dbReference type="ChEBI" id="CHEBI:46858"/>
        <dbReference type="ChEBI" id="CHEBI:83624"/>
        <dbReference type="ChEBI" id="CHEBI:456216"/>
        <dbReference type="EC" id="2.7.7.89"/>
    </reaction>
</comment>
<comment type="catalytic activity">
    <reaction evidence="1">
        <text>[glutamine synthetase]-L-tyrosine + ATP = [glutamine synthetase]-O(4)-(5'-adenylyl)-L-tyrosine + diphosphate</text>
        <dbReference type="Rhea" id="RHEA:18589"/>
        <dbReference type="Rhea" id="RHEA-COMP:10660"/>
        <dbReference type="Rhea" id="RHEA-COMP:10661"/>
        <dbReference type="ChEBI" id="CHEBI:30616"/>
        <dbReference type="ChEBI" id="CHEBI:33019"/>
        <dbReference type="ChEBI" id="CHEBI:46858"/>
        <dbReference type="ChEBI" id="CHEBI:83624"/>
        <dbReference type="EC" id="2.7.7.42"/>
    </reaction>
</comment>
<comment type="cofactor">
    <cofactor evidence="1">
        <name>Mg(2+)</name>
        <dbReference type="ChEBI" id="CHEBI:18420"/>
    </cofactor>
</comment>
<comment type="similarity">
    <text evidence="1">Belongs to the GlnE family.</text>
</comment>
<evidence type="ECO:0000255" key="1">
    <source>
        <dbReference type="HAMAP-Rule" id="MF_00802"/>
    </source>
</evidence>
<gene>
    <name evidence="1" type="primary">glnE</name>
    <name type="ordered locus">XAC0550</name>
</gene>
<dbReference type="EC" id="2.7.7.89" evidence="1"/>
<dbReference type="EC" id="2.7.7.42" evidence="1"/>
<dbReference type="EMBL" id="AE008923">
    <property type="protein sequence ID" value="AAM35439.1"/>
    <property type="molecule type" value="Genomic_DNA"/>
</dbReference>
<dbReference type="RefSeq" id="WP_011050383.1">
    <property type="nucleotide sequence ID" value="NC_003919.1"/>
</dbReference>
<dbReference type="SMR" id="Q8PPY3"/>
<dbReference type="GeneID" id="66909754"/>
<dbReference type="KEGG" id="xac:XAC0550"/>
<dbReference type="eggNOG" id="COG1391">
    <property type="taxonomic scope" value="Bacteria"/>
</dbReference>
<dbReference type="HOGENOM" id="CLU_006233_0_1_6"/>
<dbReference type="Proteomes" id="UP000000576">
    <property type="component" value="Chromosome"/>
</dbReference>
<dbReference type="GO" id="GO:0005829">
    <property type="term" value="C:cytosol"/>
    <property type="evidence" value="ECO:0007669"/>
    <property type="project" value="TreeGrafter"/>
</dbReference>
<dbReference type="GO" id="GO:0008882">
    <property type="term" value="F:[glutamate-ammonia-ligase] adenylyltransferase activity"/>
    <property type="evidence" value="ECO:0007669"/>
    <property type="project" value="UniProtKB-UniRule"/>
</dbReference>
<dbReference type="GO" id="GO:0047388">
    <property type="term" value="F:[glutamine synthetase]-adenylyl-L-tyrosine phosphorylase activity"/>
    <property type="evidence" value="ECO:0007669"/>
    <property type="project" value="UniProtKB-EC"/>
</dbReference>
<dbReference type="GO" id="GO:0005524">
    <property type="term" value="F:ATP binding"/>
    <property type="evidence" value="ECO:0007669"/>
    <property type="project" value="UniProtKB-UniRule"/>
</dbReference>
<dbReference type="GO" id="GO:0000287">
    <property type="term" value="F:magnesium ion binding"/>
    <property type="evidence" value="ECO:0007669"/>
    <property type="project" value="UniProtKB-UniRule"/>
</dbReference>
<dbReference type="GO" id="GO:0000820">
    <property type="term" value="P:regulation of glutamine family amino acid metabolic process"/>
    <property type="evidence" value="ECO:0007669"/>
    <property type="project" value="UniProtKB-UniRule"/>
</dbReference>
<dbReference type="CDD" id="cd05401">
    <property type="entry name" value="NT_GlnE_GlnD_like"/>
    <property type="match status" value="2"/>
</dbReference>
<dbReference type="FunFam" id="1.20.120.330:FF:000005">
    <property type="entry name" value="Bifunctional glutamine synthetase adenylyltransferase/adenylyl-removing enzyme"/>
    <property type="match status" value="1"/>
</dbReference>
<dbReference type="FunFam" id="3.30.460.10:FF:000009">
    <property type="entry name" value="Bifunctional glutamine synthetase adenylyltransferase/adenylyl-removing enzyme"/>
    <property type="match status" value="1"/>
</dbReference>
<dbReference type="Gene3D" id="1.20.120.1510">
    <property type="match status" value="1"/>
</dbReference>
<dbReference type="Gene3D" id="3.30.460.10">
    <property type="entry name" value="Beta Polymerase, domain 2"/>
    <property type="match status" value="2"/>
</dbReference>
<dbReference type="Gene3D" id="1.20.120.330">
    <property type="entry name" value="Nucleotidyltransferases domain 2"/>
    <property type="match status" value="2"/>
</dbReference>
<dbReference type="HAMAP" id="MF_00802">
    <property type="entry name" value="GlnE"/>
    <property type="match status" value="1"/>
</dbReference>
<dbReference type="InterPro" id="IPR023057">
    <property type="entry name" value="GlnE"/>
</dbReference>
<dbReference type="InterPro" id="IPR005190">
    <property type="entry name" value="GlnE_rpt_dom"/>
</dbReference>
<dbReference type="InterPro" id="IPR043519">
    <property type="entry name" value="NT_sf"/>
</dbReference>
<dbReference type="InterPro" id="IPR013546">
    <property type="entry name" value="PII_UdlTrfase/GS_AdlTrfase"/>
</dbReference>
<dbReference type="NCBIfam" id="NF008292">
    <property type="entry name" value="PRK11072.1"/>
    <property type="match status" value="1"/>
</dbReference>
<dbReference type="PANTHER" id="PTHR30621:SF0">
    <property type="entry name" value="BIFUNCTIONAL GLUTAMINE SYNTHETASE ADENYLYLTRANSFERASE_ADENYLYL-REMOVING ENZYME"/>
    <property type="match status" value="1"/>
</dbReference>
<dbReference type="PANTHER" id="PTHR30621">
    <property type="entry name" value="GLUTAMINE SYNTHETASE ADENYLYLTRANSFERASE"/>
    <property type="match status" value="1"/>
</dbReference>
<dbReference type="Pfam" id="PF08335">
    <property type="entry name" value="GlnD_UR_UTase"/>
    <property type="match status" value="2"/>
</dbReference>
<dbReference type="Pfam" id="PF03710">
    <property type="entry name" value="GlnE"/>
    <property type="match status" value="2"/>
</dbReference>
<dbReference type="SUPFAM" id="SSF81301">
    <property type="entry name" value="Nucleotidyltransferase"/>
    <property type="match status" value="2"/>
</dbReference>
<dbReference type="SUPFAM" id="SSF81593">
    <property type="entry name" value="Nucleotidyltransferase substrate binding subunit/domain"/>
    <property type="match status" value="2"/>
</dbReference>
<protein>
    <recommendedName>
        <fullName evidence="1">Bifunctional glutamine synthetase adenylyltransferase/adenylyl-removing enzyme</fullName>
    </recommendedName>
    <alternativeName>
        <fullName evidence="1">ATP:glutamine synthetase adenylyltransferase</fullName>
    </alternativeName>
    <alternativeName>
        <fullName evidence="1">ATase</fullName>
    </alternativeName>
    <domain>
        <recommendedName>
            <fullName evidence="1">Glutamine synthetase adenylyl-L-tyrosine phosphorylase</fullName>
            <ecNumber evidence="1">2.7.7.89</ecNumber>
        </recommendedName>
        <alternativeName>
            <fullName evidence="1">Adenylyl removase</fullName>
            <shortName evidence="1">AR</shortName>
            <shortName evidence="1">AT-N</shortName>
        </alternativeName>
    </domain>
    <domain>
        <recommendedName>
            <fullName evidence="1">Glutamine synthetase adenylyl transferase</fullName>
            <ecNumber evidence="1">2.7.7.42</ecNumber>
        </recommendedName>
        <alternativeName>
            <fullName evidence="1">Adenylyl transferase</fullName>
            <shortName evidence="1">AT</shortName>
            <shortName evidence="1">AT-C</shortName>
        </alternativeName>
    </domain>
</protein>
<accession>Q8PPY3</accession>
<name>GLNE_XANAC</name>
<keyword id="KW-0067">ATP-binding</keyword>
<keyword id="KW-0460">Magnesium</keyword>
<keyword id="KW-0511">Multifunctional enzyme</keyword>
<keyword id="KW-0547">Nucleotide-binding</keyword>
<keyword id="KW-0548">Nucleotidyltransferase</keyword>
<keyword id="KW-0808">Transferase</keyword>
<proteinExistence type="inferred from homology"/>
<organism>
    <name type="scientific">Xanthomonas axonopodis pv. citri (strain 306)</name>
    <dbReference type="NCBI Taxonomy" id="190486"/>
    <lineage>
        <taxon>Bacteria</taxon>
        <taxon>Pseudomonadati</taxon>
        <taxon>Pseudomonadota</taxon>
        <taxon>Gammaproteobacteria</taxon>
        <taxon>Lysobacterales</taxon>
        <taxon>Lysobacteraceae</taxon>
        <taxon>Xanthomonas</taxon>
    </lineage>
</organism>
<reference key="1">
    <citation type="journal article" date="2002" name="Nature">
        <title>Comparison of the genomes of two Xanthomonas pathogens with differing host specificities.</title>
        <authorList>
            <person name="da Silva A.C.R."/>
            <person name="Ferro J.A."/>
            <person name="Reinach F.C."/>
            <person name="Farah C.S."/>
            <person name="Furlan L.R."/>
            <person name="Quaggio R.B."/>
            <person name="Monteiro-Vitorello C.B."/>
            <person name="Van Sluys M.A."/>
            <person name="Almeida N.F. Jr."/>
            <person name="Alves L.M.C."/>
            <person name="do Amaral A.M."/>
            <person name="Bertolini M.C."/>
            <person name="Camargo L.E.A."/>
            <person name="Camarotte G."/>
            <person name="Cannavan F."/>
            <person name="Cardozo J."/>
            <person name="Chambergo F."/>
            <person name="Ciapina L.P."/>
            <person name="Cicarelli R.M.B."/>
            <person name="Coutinho L.L."/>
            <person name="Cursino-Santos J.R."/>
            <person name="El-Dorry H."/>
            <person name="Faria J.B."/>
            <person name="Ferreira A.J.S."/>
            <person name="Ferreira R.C.C."/>
            <person name="Ferro M.I.T."/>
            <person name="Formighieri E.F."/>
            <person name="Franco M.C."/>
            <person name="Greggio C.C."/>
            <person name="Gruber A."/>
            <person name="Katsuyama A.M."/>
            <person name="Kishi L.T."/>
            <person name="Leite R.P."/>
            <person name="Lemos E.G.M."/>
            <person name="Lemos M.V.F."/>
            <person name="Locali E.C."/>
            <person name="Machado M.A."/>
            <person name="Madeira A.M.B.N."/>
            <person name="Martinez-Rossi N.M."/>
            <person name="Martins E.C."/>
            <person name="Meidanis J."/>
            <person name="Menck C.F.M."/>
            <person name="Miyaki C.Y."/>
            <person name="Moon D.H."/>
            <person name="Moreira L.M."/>
            <person name="Novo M.T.M."/>
            <person name="Okura V.K."/>
            <person name="Oliveira M.C."/>
            <person name="Oliveira V.R."/>
            <person name="Pereira H.A."/>
            <person name="Rossi A."/>
            <person name="Sena J.A.D."/>
            <person name="Silva C."/>
            <person name="de Souza R.F."/>
            <person name="Spinola L.A.F."/>
            <person name="Takita M.A."/>
            <person name="Tamura R.E."/>
            <person name="Teixeira E.C."/>
            <person name="Tezza R.I.D."/>
            <person name="Trindade dos Santos M."/>
            <person name="Truffi D."/>
            <person name="Tsai S.M."/>
            <person name="White F.F."/>
            <person name="Setubal J.C."/>
            <person name="Kitajima J.P."/>
        </authorList>
    </citation>
    <scope>NUCLEOTIDE SEQUENCE [LARGE SCALE GENOMIC DNA]</scope>
    <source>
        <strain>306</strain>
    </source>
</reference>
<feature type="chain" id="PRO_0000209285" description="Bifunctional glutamine synthetase adenylyltransferase/adenylyl-removing enzyme">
    <location>
        <begin position="1"/>
        <end position="941"/>
    </location>
</feature>
<feature type="region of interest" description="Adenylyl removase" evidence="1">
    <location>
        <begin position="1"/>
        <end position="437"/>
    </location>
</feature>
<feature type="region of interest" description="Adenylyl transferase" evidence="1">
    <location>
        <begin position="444"/>
        <end position="941"/>
    </location>
</feature>
<sequence>MPMPTVSMSPALTALIERAVARVRQSLPVEQAWPGGEFDRQLAQVALASEFALDTLARQPALLQHLAQPDPPPLPLPQFDPAQPQLWPAQLRRYRSAESTRLVWRDVLGLDSVEATLAGATQLAEHCLQCGLQALEQQFHTRHGKVVAADGSVQRLVVFGLGKLGGGELNFSSDVDLVYAYPQGGQSDGARPLAAEEYFARLGQQLARLLDETTADGFSHRVDLRLRPFGTAGRVALSFAGMDQYFQREGRDWERYAWLKARAVAGDIDAGEAWLETLRPFVYRRYLDFTALDGLREMKAAITAEVARHDRLDDIKRGPGGIREIEFLAQSLQLIRGGREPSLRERRLLPALQALVAAGQIDQENGQALSTAYRFLRRLENRLQMLRDAQTHALPQAPLDRERIALGLGYAQWSALLDALAPQRARVAAEFAELLAPRVRATAPDALADYWRALPDGDAAPLAGIGLNDPDGAHRALADFAQSSGVRALSDSARARLDRVMPALLHAATRASQPDAAVRRMLGLLQATLRRTSYLALLDEQPSALARLVDVLSRSALLAERLAAYPLLLDELLDTRISGPLPDRAALHAACAHTLHIDDTEAALRELNERRLALSFRIALATLDGRQQAVESTRQLAWLAEAVVQTVLHLARSDMLAAHGHVPGGSFAIVGYGSLGGLELGFGSDLDLVFLYDHPREVDASDGKRPLDAGRWFARLAQKVMALLAAETGAGRLYDIDVRLRPDGGKGALVSSLASYREYQRDRAWTWEHQALVRARAVAGDAALCDAFAQVRRDTLMRVRDTAQLHEDVRKMRARMRAELDRSDAGRLDLKQGAGGLVDLEFVLQAGVLGLAAQQPQLLDACDTPALIDALARTHWLPDESAAPLHQAHATLVDAGLSCTLDRRPRLIAPTPAIQQARGIIFNAARGQGLTFPLGKDETAL</sequence>